<proteinExistence type="inferred from homology"/>
<reference key="1">
    <citation type="journal article" date="2004" name="Nat. Genet.">
        <title>Evidence in the Legionella pneumophila genome for exploitation of host cell functions and high genome plasticity.</title>
        <authorList>
            <person name="Cazalet C."/>
            <person name="Rusniok C."/>
            <person name="Brueggemann H."/>
            <person name="Zidane N."/>
            <person name="Magnier A."/>
            <person name="Ma L."/>
            <person name="Tichit M."/>
            <person name="Jarraud S."/>
            <person name="Bouchier C."/>
            <person name="Vandenesch F."/>
            <person name="Kunst F."/>
            <person name="Etienne J."/>
            <person name="Glaser P."/>
            <person name="Buchrieser C."/>
        </authorList>
    </citation>
    <scope>NUCLEOTIDE SEQUENCE [LARGE SCALE GENOMIC DNA]</scope>
    <source>
        <strain>Lens</strain>
    </source>
</reference>
<organism>
    <name type="scientific">Legionella pneumophila (strain Lens)</name>
    <dbReference type="NCBI Taxonomy" id="297245"/>
    <lineage>
        <taxon>Bacteria</taxon>
        <taxon>Pseudomonadati</taxon>
        <taxon>Pseudomonadota</taxon>
        <taxon>Gammaproteobacteria</taxon>
        <taxon>Legionellales</taxon>
        <taxon>Legionellaceae</taxon>
        <taxon>Legionella</taxon>
    </lineage>
</organism>
<dbReference type="EMBL" id="CR628337">
    <property type="protein sequence ID" value="CAH14592.1"/>
    <property type="molecule type" value="Genomic_DNA"/>
</dbReference>
<dbReference type="RefSeq" id="WP_010946072.1">
    <property type="nucleotide sequence ID" value="NC_006369.1"/>
</dbReference>
<dbReference type="SMR" id="Q5WZM0"/>
<dbReference type="GeneID" id="57034324"/>
<dbReference type="KEGG" id="lpf:lpl0361"/>
<dbReference type="LegioList" id="lpl0361"/>
<dbReference type="HOGENOM" id="CLU_086499_3_2_6"/>
<dbReference type="Proteomes" id="UP000002517">
    <property type="component" value="Chromosome"/>
</dbReference>
<dbReference type="GO" id="GO:0022625">
    <property type="term" value="C:cytosolic large ribosomal subunit"/>
    <property type="evidence" value="ECO:0007669"/>
    <property type="project" value="TreeGrafter"/>
</dbReference>
<dbReference type="GO" id="GO:0003729">
    <property type="term" value="F:mRNA binding"/>
    <property type="evidence" value="ECO:0007669"/>
    <property type="project" value="TreeGrafter"/>
</dbReference>
<dbReference type="GO" id="GO:0003735">
    <property type="term" value="F:structural constituent of ribosome"/>
    <property type="evidence" value="ECO:0007669"/>
    <property type="project" value="InterPro"/>
</dbReference>
<dbReference type="GO" id="GO:0006412">
    <property type="term" value="P:translation"/>
    <property type="evidence" value="ECO:0007669"/>
    <property type="project" value="UniProtKB-UniRule"/>
</dbReference>
<dbReference type="CDD" id="cd00387">
    <property type="entry name" value="Ribosomal_L7_L12"/>
    <property type="match status" value="1"/>
</dbReference>
<dbReference type="FunFam" id="3.30.1390.10:FF:000001">
    <property type="entry name" value="50S ribosomal protein L7/L12"/>
    <property type="match status" value="1"/>
</dbReference>
<dbReference type="Gene3D" id="3.30.1390.10">
    <property type="match status" value="1"/>
</dbReference>
<dbReference type="Gene3D" id="1.20.5.710">
    <property type="entry name" value="Single helix bin"/>
    <property type="match status" value="1"/>
</dbReference>
<dbReference type="HAMAP" id="MF_00368">
    <property type="entry name" value="Ribosomal_bL12"/>
    <property type="match status" value="1"/>
</dbReference>
<dbReference type="InterPro" id="IPR000206">
    <property type="entry name" value="Ribosomal_bL12"/>
</dbReference>
<dbReference type="InterPro" id="IPR013823">
    <property type="entry name" value="Ribosomal_bL12_C"/>
</dbReference>
<dbReference type="InterPro" id="IPR014719">
    <property type="entry name" value="Ribosomal_bL12_C/ClpS-like"/>
</dbReference>
<dbReference type="InterPro" id="IPR008932">
    <property type="entry name" value="Ribosomal_bL12_oligo"/>
</dbReference>
<dbReference type="InterPro" id="IPR036235">
    <property type="entry name" value="Ribosomal_bL12_oligo_N_sf"/>
</dbReference>
<dbReference type="NCBIfam" id="TIGR00855">
    <property type="entry name" value="L12"/>
    <property type="match status" value="1"/>
</dbReference>
<dbReference type="PANTHER" id="PTHR45987">
    <property type="entry name" value="39S RIBOSOMAL PROTEIN L12"/>
    <property type="match status" value="1"/>
</dbReference>
<dbReference type="PANTHER" id="PTHR45987:SF4">
    <property type="entry name" value="LARGE RIBOSOMAL SUBUNIT PROTEIN BL12M"/>
    <property type="match status" value="1"/>
</dbReference>
<dbReference type="Pfam" id="PF00542">
    <property type="entry name" value="Ribosomal_L12"/>
    <property type="match status" value="1"/>
</dbReference>
<dbReference type="Pfam" id="PF16320">
    <property type="entry name" value="Ribosomal_L12_N"/>
    <property type="match status" value="1"/>
</dbReference>
<dbReference type="SUPFAM" id="SSF54736">
    <property type="entry name" value="ClpS-like"/>
    <property type="match status" value="1"/>
</dbReference>
<dbReference type="SUPFAM" id="SSF48300">
    <property type="entry name" value="Ribosomal protein L7/12, oligomerisation (N-terminal) domain"/>
    <property type="match status" value="1"/>
</dbReference>
<feature type="chain" id="PRO_0000243440" description="Large ribosomal subunit protein bL12">
    <location>
        <begin position="1"/>
        <end position="126"/>
    </location>
</feature>
<gene>
    <name evidence="1" type="primary">rplL</name>
    <name type="ordered locus">lpl0361</name>
</gene>
<sequence>MAVSKNEILETISNMTVMEVVELIEAMEEKFNVSAAAAAVAVAAPAAGAGAAAAEEQTEFTVVMTSFGSNKVNVIKAIRGITGLGLKEAKDLVEGAPSTVKEGVSKDEAASIKKELEEAGATVEVK</sequence>
<name>RL7_LEGPL</name>
<protein>
    <recommendedName>
        <fullName evidence="1">Large ribosomal subunit protein bL12</fullName>
    </recommendedName>
    <alternativeName>
        <fullName evidence="2">50S ribosomal protein L7/L12</fullName>
    </alternativeName>
</protein>
<evidence type="ECO:0000255" key="1">
    <source>
        <dbReference type="HAMAP-Rule" id="MF_00368"/>
    </source>
</evidence>
<evidence type="ECO:0000305" key="2"/>
<comment type="function">
    <text evidence="1">Forms part of the ribosomal stalk which helps the ribosome interact with GTP-bound translation factors. Is thus essential for accurate translation.</text>
</comment>
<comment type="subunit">
    <text evidence="1">Homodimer. Part of the ribosomal stalk of the 50S ribosomal subunit. Forms a multimeric L10(L12)X complex, where L10 forms an elongated spine to which 2 to 4 L12 dimers bind in a sequential fashion. Binds GTP-bound translation factors.</text>
</comment>
<comment type="similarity">
    <text evidence="1">Belongs to the bacterial ribosomal protein bL12 family.</text>
</comment>
<accession>Q5WZM0</accession>
<keyword id="KW-0687">Ribonucleoprotein</keyword>
<keyword id="KW-0689">Ribosomal protein</keyword>